<comment type="function">
    <text evidence="1">Flavin transferase that catalyzes the transfer of the FMN moiety of FAD and its covalent binding to the hydroxyl group of a threonine residue in a target flavoprotein such as NqrB and NqrC, two subunits of the NQR complex.</text>
</comment>
<comment type="catalytic activity">
    <reaction evidence="1">
        <text>L-threonyl-[protein] + FAD = FMN-L-threonyl-[protein] + AMP + H(+)</text>
        <dbReference type="Rhea" id="RHEA:36847"/>
        <dbReference type="Rhea" id="RHEA-COMP:11060"/>
        <dbReference type="Rhea" id="RHEA-COMP:11061"/>
        <dbReference type="ChEBI" id="CHEBI:15378"/>
        <dbReference type="ChEBI" id="CHEBI:30013"/>
        <dbReference type="ChEBI" id="CHEBI:57692"/>
        <dbReference type="ChEBI" id="CHEBI:74257"/>
        <dbReference type="ChEBI" id="CHEBI:456215"/>
        <dbReference type="EC" id="2.7.1.180"/>
    </reaction>
</comment>
<comment type="cofactor">
    <cofactor evidence="1">
        <name>Mg(2+)</name>
        <dbReference type="ChEBI" id="CHEBI:18420"/>
    </cofactor>
</comment>
<comment type="subcellular location">
    <subcellularLocation>
        <location evidence="4 6">Cell inner membrane</location>
        <topology evidence="4 6">Lipid-anchor</topology>
        <orientation evidence="4">Periplasmic side</orientation>
    </subcellularLocation>
</comment>
<comment type="similarity">
    <text evidence="7">Belongs to the ApbE family.</text>
</comment>
<comment type="sequence caution" evidence="7">
    <conflict type="frameshift">
        <sequence resource="EMBL" id="AE013218"/>
    </conflict>
</comment>
<proteinExistence type="inferred from homology"/>
<organism>
    <name type="scientific">Buchnera aphidicola subsp. Schizaphis graminum (strain Sg)</name>
    <dbReference type="NCBI Taxonomy" id="198804"/>
    <lineage>
        <taxon>Bacteria</taxon>
        <taxon>Pseudomonadati</taxon>
        <taxon>Pseudomonadota</taxon>
        <taxon>Gammaproteobacteria</taxon>
        <taxon>Enterobacterales</taxon>
        <taxon>Erwiniaceae</taxon>
        <taxon>Buchnera</taxon>
    </lineage>
</organism>
<accession>O85292</accession>
<protein>
    <recommendedName>
        <fullName evidence="1">FAD:protein FMN transferase</fullName>
        <ecNumber evidence="1">2.7.1.180</ecNumber>
    </recommendedName>
    <alternativeName>
        <fullName evidence="1">Flavin transferase</fullName>
    </alternativeName>
</protein>
<gene>
    <name type="primary">apbE</name>
    <name type="ordered locus">BUsg_221</name>
</gene>
<feature type="signal peptide" evidence="5">
    <location>
        <begin position="1"/>
        <end position="22"/>
    </location>
</feature>
<feature type="chain" id="PRO_0000001752" description="FAD:protein FMN transferase">
    <location>
        <begin position="23"/>
        <end position="340"/>
    </location>
</feature>
<feature type="binding site" evidence="4">
    <location>
        <position position="36"/>
    </location>
    <ligand>
        <name>FAD</name>
        <dbReference type="ChEBI" id="CHEBI:57692"/>
    </ligand>
</feature>
<feature type="binding site" evidence="4">
    <location>
        <position position="71"/>
    </location>
    <ligand>
        <name>FAD</name>
        <dbReference type="ChEBI" id="CHEBI:57692"/>
    </ligand>
</feature>
<feature type="binding site" evidence="4">
    <location>
        <begin position="112"/>
        <end position="114"/>
    </location>
    <ligand>
        <name>FAD</name>
        <dbReference type="ChEBI" id="CHEBI:57692"/>
    </ligand>
</feature>
<feature type="binding site" evidence="4">
    <location>
        <position position="174"/>
    </location>
    <ligand>
        <name>FAD</name>
        <dbReference type="ChEBI" id="CHEBI:57692"/>
    </ligand>
</feature>
<feature type="binding site" evidence="3">
    <location>
        <position position="177"/>
    </location>
    <ligand>
        <name>Mg(2+)</name>
        <dbReference type="ChEBI" id="CHEBI:18420"/>
    </ligand>
</feature>
<feature type="binding site" evidence="4">
    <location>
        <position position="180"/>
    </location>
    <ligand>
        <name>FAD</name>
        <dbReference type="ChEBI" id="CHEBI:57692"/>
    </ligand>
</feature>
<feature type="binding site" evidence="4">
    <location>
        <position position="264"/>
    </location>
    <ligand>
        <name>FAD</name>
        <dbReference type="ChEBI" id="CHEBI:57692"/>
    </ligand>
</feature>
<feature type="binding site" evidence="2">
    <location>
        <position position="290"/>
    </location>
    <ligand>
        <name>Mg(2+)</name>
        <dbReference type="ChEBI" id="CHEBI:18420"/>
    </ligand>
</feature>
<feature type="binding site" evidence="3">
    <location>
        <position position="293"/>
    </location>
    <ligand>
        <name>Mg(2+)</name>
        <dbReference type="ChEBI" id="CHEBI:18420"/>
    </ligand>
</feature>
<feature type="binding site" evidence="2">
    <location>
        <position position="294"/>
    </location>
    <ligand>
        <name>Mg(2+)</name>
        <dbReference type="ChEBI" id="CHEBI:18420"/>
    </ligand>
</feature>
<keyword id="KW-0997">Cell inner membrane</keyword>
<keyword id="KW-1003">Cell membrane</keyword>
<keyword id="KW-0274">FAD</keyword>
<keyword id="KW-0285">Flavoprotein</keyword>
<keyword id="KW-0449">Lipoprotein</keyword>
<keyword id="KW-0460">Magnesium</keyword>
<keyword id="KW-0472">Membrane</keyword>
<keyword id="KW-0479">Metal-binding</keyword>
<keyword id="KW-0732">Signal</keyword>
<keyword id="KW-0808">Transferase</keyword>
<name>APBE_BUCAP</name>
<sequence length="340" mass="38703">MILNFIFNVFFLFIIFFTILHKNEEKKSIKLKGKTMGTYWQVKIPYVPNQLHIKNLIQRKLDEDEKLLSSWKKNSLVSKFNKLKKNQLLAIDKKFFKIISIALKINKKTYGKLDITIGNLINIWGFGNQKKPHNYPSINKIKQVMALTGMKHLSLISNANKHYIKKNIDGMKINLSTLGEGFAADHLSSVLKKEGIENYTISIGGTVLVKIKNKENSKIIAIQKPTDKIQSIHLLIHLKNKSISTAGTYRNYYYLKGKKISHLIDPKTGMPVTHNLISVSVISSTALEADGWDSALLILGFKKAKILALRENLAVCLITKKNNTFSTWISPCFKKFLINT</sequence>
<evidence type="ECO:0000250" key="1">
    <source>
        <dbReference type="UniProtKB" id="A5F5Y3"/>
    </source>
</evidence>
<evidence type="ECO:0000250" key="2">
    <source>
        <dbReference type="UniProtKB" id="O83774"/>
    </source>
</evidence>
<evidence type="ECO:0000250" key="3">
    <source>
        <dbReference type="UniProtKB" id="P0AB85"/>
    </source>
</evidence>
<evidence type="ECO:0000250" key="4">
    <source>
        <dbReference type="UniProtKB" id="P41780"/>
    </source>
</evidence>
<evidence type="ECO:0000255" key="5"/>
<evidence type="ECO:0000255" key="6">
    <source>
        <dbReference type="PROSITE-ProRule" id="PRU00303"/>
    </source>
</evidence>
<evidence type="ECO:0000305" key="7"/>
<reference key="1">
    <citation type="journal article" date="1998" name="Curr. Microbiol.">
        <title>Sequence analysis of a DNA fragment from Buchnera aphidicola (Aphid endosymbiont) containing the genes dapD-htrA-ilvI-ilvH-ftsL-ftsI-murE.</title>
        <authorList>
            <person name="Thao M.L."/>
            <person name="Baumann P."/>
        </authorList>
    </citation>
    <scope>NUCLEOTIDE SEQUENCE [GENOMIC DNA]</scope>
</reference>
<reference key="2">
    <citation type="submission" date="1999-03" db="EMBL/GenBank/DDBJ databases">
        <authorList>
            <person name="Thao M.L."/>
            <person name="Baumann P."/>
        </authorList>
    </citation>
    <scope>SEQUENCE REVISION</scope>
</reference>
<reference key="3">
    <citation type="journal article" date="2002" name="Science">
        <title>50 million years of genomic stasis in endosymbiotic bacteria.</title>
        <authorList>
            <person name="Tamas I."/>
            <person name="Klasson L."/>
            <person name="Canbaeck B."/>
            <person name="Naeslund A.K."/>
            <person name="Eriksson A.-S."/>
            <person name="Wernegreen J.J."/>
            <person name="Sandstroem J.P."/>
            <person name="Moran N.A."/>
            <person name="Andersson S.G.E."/>
        </authorList>
    </citation>
    <scope>NUCLEOTIDE SEQUENCE [LARGE SCALE GENOMIC DNA]</scope>
    <source>
        <strain>Sg</strain>
    </source>
</reference>
<dbReference type="EC" id="2.7.1.180" evidence="1"/>
<dbReference type="EMBL" id="AF060492">
    <property type="protein sequence ID" value="AAC32332.2"/>
    <property type="molecule type" value="Genomic_DNA"/>
</dbReference>
<dbReference type="EMBL" id="AE013218">
    <property type="status" value="NOT_ANNOTATED_CDS"/>
    <property type="molecule type" value="Genomic_DNA"/>
</dbReference>
<dbReference type="SMR" id="O85292"/>
<dbReference type="Proteomes" id="UP000000416">
    <property type="component" value="Chromosome"/>
</dbReference>
<dbReference type="GO" id="GO:0005886">
    <property type="term" value="C:plasma membrane"/>
    <property type="evidence" value="ECO:0007669"/>
    <property type="project" value="UniProtKB-SubCell"/>
</dbReference>
<dbReference type="GO" id="GO:0046872">
    <property type="term" value="F:metal ion binding"/>
    <property type="evidence" value="ECO:0007669"/>
    <property type="project" value="UniProtKB-KW"/>
</dbReference>
<dbReference type="GO" id="GO:0016740">
    <property type="term" value="F:transferase activity"/>
    <property type="evidence" value="ECO:0007669"/>
    <property type="project" value="UniProtKB-KW"/>
</dbReference>
<dbReference type="Gene3D" id="3.10.520.10">
    <property type="entry name" value="ApbE-like domains"/>
    <property type="match status" value="1"/>
</dbReference>
<dbReference type="InterPro" id="IPR024932">
    <property type="entry name" value="ApbE"/>
</dbReference>
<dbReference type="InterPro" id="IPR003374">
    <property type="entry name" value="ApbE-like_sf"/>
</dbReference>
<dbReference type="PANTHER" id="PTHR30040:SF2">
    <property type="entry name" value="FAD:PROTEIN FMN TRANSFERASE"/>
    <property type="match status" value="1"/>
</dbReference>
<dbReference type="PANTHER" id="PTHR30040">
    <property type="entry name" value="THIAMINE BIOSYNTHESIS LIPOPROTEIN APBE"/>
    <property type="match status" value="1"/>
</dbReference>
<dbReference type="Pfam" id="PF02424">
    <property type="entry name" value="ApbE"/>
    <property type="match status" value="1"/>
</dbReference>
<dbReference type="PIRSF" id="PIRSF006268">
    <property type="entry name" value="ApbE"/>
    <property type="match status" value="1"/>
</dbReference>
<dbReference type="SUPFAM" id="SSF143631">
    <property type="entry name" value="ApbE-like"/>
    <property type="match status" value="1"/>
</dbReference>